<accession>Q9SYC9</accession>
<name>VAP14_ARATH</name>
<keyword id="KW-0025">Alternative splicing</keyword>
<keyword id="KW-0378">Hydrolase</keyword>
<keyword id="KW-0520">NAD</keyword>
<keyword id="KW-1185">Reference proteome</keyword>
<keyword id="KW-0677">Repeat</keyword>
<gene>
    <name type="primary">PVA14</name>
    <name type="ordered locus">At1g51270</name>
    <name type="ORF">F11M15.13</name>
</gene>
<comment type="function">
    <text evidence="1">May play a role in vesicle trafficking.</text>
</comment>
<comment type="catalytic activity">
    <reaction evidence="3">
        <text>NAD(+) + H2O = ADP-D-ribose + nicotinamide + H(+)</text>
        <dbReference type="Rhea" id="RHEA:16301"/>
        <dbReference type="ChEBI" id="CHEBI:15377"/>
        <dbReference type="ChEBI" id="CHEBI:15378"/>
        <dbReference type="ChEBI" id="CHEBI:17154"/>
        <dbReference type="ChEBI" id="CHEBI:57540"/>
        <dbReference type="ChEBI" id="CHEBI:57967"/>
        <dbReference type="EC" id="3.2.2.6"/>
    </reaction>
    <physiologicalReaction direction="left-to-right" evidence="3">
        <dbReference type="Rhea" id="RHEA:16302"/>
    </physiologicalReaction>
</comment>
<comment type="alternative products">
    <event type="alternative splicing"/>
    <isoform>
        <id>Q9SYC9-1</id>
        <name>1</name>
        <sequence type="displayed"/>
    </isoform>
    <text>A number of isoforms are produced. According to EST sequences.</text>
</comment>
<comment type="domain">
    <text evidence="3">The TIR domain mediates NAD(+) hydrolase (NADase) activity. Self-association of TIR domains is required for NADase activity.</text>
</comment>
<comment type="similarity">
    <text evidence="5">Belongs to the VAMP-associated protein (VAP) (TC 9.B.17) family.</text>
</comment>
<reference key="1">
    <citation type="journal article" date="2000" name="Nature">
        <title>Sequence and analysis of chromosome 1 of the plant Arabidopsis thaliana.</title>
        <authorList>
            <person name="Theologis A."/>
            <person name="Ecker J.R."/>
            <person name="Palm C.J."/>
            <person name="Federspiel N.A."/>
            <person name="Kaul S."/>
            <person name="White O."/>
            <person name="Alonso J."/>
            <person name="Altafi H."/>
            <person name="Araujo R."/>
            <person name="Bowman C.L."/>
            <person name="Brooks S.Y."/>
            <person name="Buehler E."/>
            <person name="Chan A."/>
            <person name="Chao Q."/>
            <person name="Chen H."/>
            <person name="Cheuk R.F."/>
            <person name="Chin C.W."/>
            <person name="Chung M.K."/>
            <person name="Conn L."/>
            <person name="Conway A.B."/>
            <person name="Conway A.R."/>
            <person name="Creasy T.H."/>
            <person name="Dewar K."/>
            <person name="Dunn P."/>
            <person name="Etgu P."/>
            <person name="Feldblyum T.V."/>
            <person name="Feng J.-D."/>
            <person name="Fong B."/>
            <person name="Fujii C.Y."/>
            <person name="Gill J.E."/>
            <person name="Goldsmith A.D."/>
            <person name="Haas B."/>
            <person name="Hansen N.F."/>
            <person name="Hughes B."/>
            <person name="Huizar L."/>
            <person name="Hunter J.L."/>
            <person name="Jenkins J."/>
            <person name="Johnson-Hopson C."/>
            <person name="Khan S."/>
            <person name="Khaykin E."/>
            <person name="Kim C.J."/>
            <person name="Koo H.L."/>
            <person name="Kremenetskaia I."/>
            <person name="Kurtz D.B."/>
            <person name="Kwan A."/>
            <person name="Lam B."/>
            <person name="Langin-Hooper S."/>
            <person name="Lee A."/>
            <person name="Lee J.M."/>
            <person name="Lenz C.A."/>
            <person name="Li J.H."/>
            <person name="Li Y.-P."/>
            <person name="Lin X."/>
            <person name="Liu S.X."/>
            <person name="Liu Z.A."/>
            <person name="Luros J.S."/>
            <person name="Maiti R."/>
            <person name="Marziali A."/>
            <person name="Militscher J."/>
            <person name="Miranda M."/>
            <person name="Nguyen M."/>
            <person name="Nierman W.C."/>
            <person name="Osborne B.I."/>
            <person name="Pai G."/>
            <person name="Peterson J."/>
            <person name="Pham P.K."/>
            <person name="Rizzo M."/>
            <person name="Rooney T."/>
            <person name="Rowley D."/>
            <person name="Sakano H."/>
            <person name="Salzberg S.L."/>
            <person name="Schwartz J.R."/>
            <person name="Shinn P."/>
            <person name="Southwick A.M."/>
            <person name="Sun H."/>
            <person name="Tallon L.J."/>
            <person name="Tambunga G."/>
            <person name="Toriumi M.J."/>
            <person name="Town C.D."/>
            <person name="Utterback T."/>
            <person name="Van Aken S."/>
            <person name="Vaysberg M."/>
            <person name="Vysotskaia V.S."/>
            <person name="Walker M."/>
            <person name="Wu D."/>
            <person name="Yu G."/>
            <person name="Fraser C.M."/>
            <person name="Venter J.C."/>
            <person name="Davis R.W."/>
        </authorList>
    </citation>
    <scope>NUCLEOTIDE SEQUENCE [LARGE SCALE GENOMIC DNA]</scope>
    <source>
        <strain>cv. Columbia</strain>
    </source>
</reference>
<reference key="2">
    <citation type="journal article" date="2017" name="Plant J.">
        <title>Araport11: a complete reannotation of the Arabidopsis thaliana reference genome.</title>
        <authorList>
            <person name="Cheng C.Y."/>
            <person name="Krishnakumar V."/>
            <person name="Chan A.P."/>
            <person name="Thibaud-Nissen F."/>
            <person name="Schobel S."/>
            <person name="Town C.D."/>
        </authorList>
    </citation>
    <scope>GENOME REANNOTATION</scope>
    <source>
        <strain>cv. Columbia</strain>
    </source>
</reference>
<reference key="3">
    <citation type="submission" date="2004-09" db="EMBL/GenBank/DDBJ databases">
        <authorList>
            <person name="Wrobel R.L."/>
            <person name="Kimball T.L."/>
            <person name="Riters M.A."/>
            <person name="Steffen E."/>
            <person name="Thao S."/>
            <person name="Aceti D.J."/>
            <person name="Blommel P.G."/>
            <person name="Newman C.S."/>
            <person name="Zhao Q."/>
            <person name="Fox B.G."/>
            <person name="Phillips G.N. Jr."/>
            <person name="Markley J.L."/>
        </authorList>
    </citation>
    <scope>NUCLEOTIDE SEQUENCE [LARGE SCALE MRNA] OF 333-571</scope>
</reference>
<feature type="chain" id="PRO_0000402172" description="Vesicle-associated protein 1-4">
    <location>
        <begin position="1"/>
        <end position="571"/>
    </location>
</feature>
<feature type="domain" description="MSP 1" evidence="2">
    <location>
        <begin position="1"/>
        <end position="126"/>
    </location>
</feature>
<feature type="domain" description="MSP 2" evidence="2">
    <location>
        <begin position="176"/>
        <end position="296"/>
    </location>
</feature>
<feature type="domain" description="TIR" evidence="3">
    <location>
        <begin position="356"/>
        <end position="493"/>
    </location>
</feature>
<feature type="region of interest" description="Disordered" evidence="4">
    <location>
        <begin position="132"/>
        <end position="154"/>
    </location>
</feature>
<feature type="region of interest" description="Disordered" evidence="4">
    <location>
        <begin position="297"/>
        <end position="322"/>
    </location>
</feature>
<feature type="compositionally biased region" description="Polar residues" evidence="4">
    <location>
        <begin position="143"/>
        <end position="153"/>
    </location>
</feature>
<feature type="compositionally biased region" description="Polar residues" evidence="4">
    <location>
        <begin position="311"/>
        <end position="322"/>
    </location>
</feature>
<feature type="active site" evidence="3">
    <location>
        <position position="430"/>
    </location>
</feature>
<feature type="sequence conflict" description="In Ref. 3; BT015497." evidence="5" ref="3">
    <original>S</original>
    <variation>G</variation>
    <location>
        <position position="372"/>
    </location>
</feature>
<protein>
    <recommendedName>
        <fullName>Vesicle-associated protein 1-4</fullName>
        <ecNumber evidence="3">3.2.2.6</ecNumber>
    </recommendedName>
    <alternativeName>
        <fullName>Plant VAP homolog 14</fullName>
        <shortName>AtPVA14</shortName>
    </alternativeName>
    <alternativeName>
        <fullName>VAMP-associated protein 1-4</fullName>
    </alternativeName>
</protein>
<organism>
    <name type="scientific">Arabidopsis thaliana</name>
    <name type="common">Mouse-ear cress</name>
    <dbReference type="NCBI Taxonomy" id="3702"/>
    <lineage>
        <taxon>Eukaryota</taxon>
        <taxon>Viridiplantae</taxon>
        <taxon>Streptophyta</taxon>
        <taxon>Embryophyta</taxon>
        <taxon>Tracheophyta</taxon>
        <taxon>Spermatophyta</taxon>
        <taxon>Magnoliopsida</taxon>
        <taxon>eudicotyledons</taxon>
        <taxon>Gunneridae</taxon>
        <taxon>Pentapetalae</taxon>
        <taxon>rosids</taxon>
        <taxon>malvids</taxon>
        <taxon>Brassicales</taxon>
        <taxon>Brassicaceae</taxon>
        <taxon>Camelineae</taxon>
        <taxon>Arabidopsis</taxon>
    </lineage>
</organism>
<proteinExistence type="evidence at transcript level"/>
<evidence type="ECO:0000250" key="1"/>
<evidence type="ECO:0000255" key="2">
    <source>
        <dbReference type="PROSITE-ProRule" id="PRU00132"/>
    </source>
</evidence>
<evidence type="ECO:0000255" key="3">
    <source>
        <dbReference type="PROSITE-ProRule" id="PRU00204"/>
    </source>
</evidence>
<evidence type="ECO:0000256" key="4">
    <source>
        <dbReference type="SAM" id="MobiDB-lite"/>
    </source>
</evidence>
<evidence type="ECO:0000305" key="5"/>
<dbReference type="EC" id="3.2.2.6" evidence="3"/>
<dbReference type="EMBL" id="AC006085">
    <property type="protein sequence ID" value="AAD30639.1"/>
    <property type="molecule type" value="Genomic_DNA"/>
</dbReference>
<dbReference type="EMBL" id="CP002684">
    <property type="protein sequence ID" value="AEE32644.1"/>
    <property type="molecule type" value="Genomic_DNA"/>
</dbReference>
<dbReference type="EMBL" id="BT015497">
    <property type="status" value="NOT_ANNOTATED_CDS"/>
    <property type="molecule type" value="mRNA"/>
</dbReference>
<dbReference type="PIR" id="E96550">
    <property type="entry name" value="E96550"/>
</dbReference>
<dbReference type="RefSeq" id="NP_175538.3">
    <molecule id="Q9SYC9-1"/>
    <property type="nucleotide sequence ID" value="NM_104005.3"/>
</dbReference>
<dbReference type="SMR" id="Q9SYC9"/>
<dbReference type="STRING" id="3702.Q9SYC9"/>
<dbReference type="GlyGen" id="Q9SYC9">
    <property type="glycosylation" value="1 site"/>
</dbReference>
<dbReference type="PaxDb" id="3702-AT1G51270.3"/>
<dbReference type="EnsemblPlants" id="AT1G51270.1">
    <molecule id="Q9SYC9-1"/>
    <property type="protein sequence ID" value="AT1G51270.1"/>
    <property type="gene ID" value="AT1G51270"/>
</dbReference>
<dbReference type="GeneID" id="841550"/>
<dbReference type="Gramene" id="AT1G51270.1">
    <molecule id="Q9SYC9-1"/>
    <property type="protein sequence ID" value="AT1G51270.1"/>
    <property type="gene ID" value="AT1G51270"/>
</dbReference>
<dbReference type="KEGG" id="ath:AT1G51270"/>
<dbReference type="Araport" id="AT1G51270"/>
<dbReference type="TAIR" id="AT1G51270"/>
<dbReference type="eggNOG" id="KOG0439">
    <property type="taxonomic scope" value="Eukaryota"/>
</dbReference>
<dbReference type="InParanoid" id="Q9SYC9"/>
<dbReference type="PRO" id="PR:Q9SYC9"/>
<dbReference type="Proteomes" id="UP000006548">
    <property type="component" value="Chromosome 1"/>
</dbReference>
<dbReference type="ExpressionAtlas" id="Q9SYC9">
    <property type="expression patterns" value="baseline and differential"/>
</dbReference>
<dbReference type="GO" id="GO:0005789">
    <property type="term" value="C:endoplasmic reticulum membrane"/>
    <property type="evidence" value="ECO:0007669"/>
    <property type="project" value="InterPro"/>
</dbReference>
<dbReference type="GO" id="GO:0061809">
    <property type="term" value="F:NAD+ nucleosidase activity, cyclic ADP-ribose generating"/>
    <property type="evidence" value="ECO:0007669"/>
    <property type="project" value="UniProtKB-EC"/>
</dbReference>
<dbReference type="GO" id="GO:0007165">
    <property type="term" value="P:signal transduction"/>
    <property type="evidence" value="ECO:0007669"/>
    <property type="project" value="InterPro"/>
</dbReference>
<dbReference type="FunFam" id="3.40.50.10140:FF:000007">
    <property type="entry name" value="Disease resistance protein (TIR-NBS-LRR class)"/>
    <property type="match status" value="1"/>
</dbReference>
<dbReference type="FunFam" id="2.60.40.10:FF:000813">
    <property type="entry name" value="Vesicle-associated protein 1-1"/>
    <property type="match status" value="2"/>
</dbReference>
<dbReference type="Gene3D" id="2.60.40.10">
    <property type="entry name" value="Immunoglobulins"/>
    <property type="match status" value="2"/>
</dbReference>
<dbReference type="Gene3D" id="3.40.50.10140">
    <property type="entry name" value="Toll/interleukin-1 receptor homology (TIR) domain"/>
    <property type="match status" value="1"/>
</dbReference>
<dbReference type="InterPro" id="IPR013783">
    <property type="entry name" value="Ig-like_fold"/>
</dbReference>
<dbReference type="InterPro" id="IPR000535">
    <property type="entry name" value="MSP_dom"/>
</dbReference>
<dbReference type="InterPro" id="IPR008962">
    <property type="entry name" value="PapD-like_sf"/>
</dbReference>
<dbReference type="InterPro" id="IPR000157">
    <property type="entry name" value="TIR_dom"/>
</dbReference>
<dbReference type="InterPro" id="IPR035897">
    <property type="entry name" value="Toll_tir_struct_dom_sf"/>
</dbReference>
<dbReference type="InterPro" id="IPR016763">
    <property type="entry name" value="VAP"/>
</dbReference>
<dbReference type="PANTHER" id="PTHR10809">
    <property type="entry name" value="VESICLE-ASSOCIATED MEMBRANE PROTEIN-ASSOCIATED PROTEIN"/>
    <property type="match status" value="1"/>
</dbReference>
<dbReference type="PANTHER" id="PTHR10809:SF119">
    <property type="entry name" value="VESICLE-ASSOCIATED PROTEIN 1-2-RELATED"/>
    <property type="match status" value="1"/>
</dbReference>
<dbReference type="Pfam" id="PF00635">
    <property type="entry name" value="Motile_Sperm"/>
    <property type="match status" value="2"/>
</dbReference>
<dbReference type="Pfam" id="PF01582">
    <property type="entry name" value="TIR"/>
    <property type="match status" value="1"/>
</dbReference>
<dbReference type="SMART" id="SM00255">
    <property type="entry name" value="TIR"/>
    <property type="match status" value="1"/>
</dbReference>
<dbReference type="SUPFAM" id="SSF49354">
    <property type="entry name" value="PapD-like"/>
    <property type="match status" value="2"/>
</dbReference>
<dbReference type="SUPFAM" id="SSF52200">
    <property type="entry name" value="Toll/Interleukin receptor TIR domain"/>
    <property type="match status" value="1"/>
</dbReference>
<dbReference type="PROSITE" id="PS50202">
    <property type="entry name" value="MSP"/>
    <property type="match status" value="2"/>
</dbReference>
<dbReference type="PROSITE" id="PS50104">
    <property type="entry name" value="TIR"/>
    <property type="match status" value="1"/>
</dbReference>
<sequence>MSTDELLTFDHVDIRFPIELNKQGSCSLNLTNKTDNYVAFKAQTTKPKMYCVKPSVGVVLPRSSCEVLVVMQALKEAPADRQCKDKLLFQCKVVEPGTMDKEVTSEMFSKEAGHRVEETIFKIIYVAPPQPQSPVQEGLEDGSSPSASVSDKGNASEVFVGPSVGIVDLIRMSDELLIIDPVDVQFPIELNKKVSCSLNLTNKTENYVAFKAKTTNAKKYYVRPNVGVVLPRSSCEVLVIMQALKEAPADMQCRDKLLFQCKVVEPETTAKDVTSEMFSKEAGHPAEETRLKVMYVTPPQPPSPVQEGTEEGSSPRASVSDNGNASEAFVDMLRSLLVPLFSNAASSTDDHGITLPQYQVFINFRGDELRNSFVGFLVKAMRLEKINVFTDEVELRGTNLNYLFRRIEESRVAVAIFSERYTESCWCLDELVKMKEQMEQGKLVVVPVFYRLNATACKRFMGAFGDNLRNLEWEYRSEPERIQKWKEALSSVFSNIGLTSDIRRYNLINKNMDHTSEFLYIVLILNFFSEISDMTGLTTSYQFLLMMKSNLISYDIYIYPTKFCVNVFIGV</sequence>